<protein>
    <recommendedName>
        <fullName evidence="1">Probable oxaloacetate decarboxylase gamma chain</fullName>
        <ecNumber evidence="1">7.2.4.2</ecNumber>
    </recommendedName>
</protein>
<sequence>MTETELFKEGLNLMFSGMGFVIIFLLILIWAIGIVSKLINTFFPEPIPVAQAKKTVTPTQSAVVDDIERLRPVIVAAIAHHRRTQGLN</sequence>
<reference key="1">
    <citation type="journal article" date="2004" name="Nat. Biotechnol.">
        <title>The genome sequence of the capnophilic rumen bacterium Mannheimia succiniciproducens.</title>
        <authorList>
            <person name="Hong S.H."/>
            <person name="Kim J.S."/>
            <person name="Lee S.Y."/>
            <person name="In Y.H."/>
            <person name="Choi S.S."/>
            <person name="Rih J.-K."/>
            <person name="Kim C.H."/>
            <person name="Jeong H."/>
            <person name="Hur C.G."/>
            <person name="Kim J.J."/>
        </authorList>
    </citation>
    <scope>NUCLEOTIDE SEQUENCE [LARGE SCALE GENOMIC DNA]</scope>
    <source>
        <strain>KCTC 0769BP / MBEL55E</strain>
    </source>
</reference>
<dbReference type="EC" id="7.2.4.2" evidence="1"/>
<dbReference type="EMBL" id="AE016827">
    <property type="protein sequence ID" value="AAU36647.1"/>
    <property type="molecule type" value="Genomic_DNA"/>
</dbReference>
<dbReference type="RefSeq" id="WP_011199224.1">
    <property type="nucleotide sequence ID" value="NC_006300.1"/>
</dbReference>
<dbReference type="SMR" id="Q65WL3"/>
<dbReference type="STRING" id="221988.MS0040"/>
<dbReference type="KEGG" id="msu:MS0040"/>
<dbReference type="eggNOG" id="COG3630">
    <property type="taxonomic scope" value="Bacteria"/>
</dbReference>
<dbReference type="HOGENOM" id="CLU_168750_3_2_6"/>
<dbReference type="OrthoDB" id="5772594at2"/>
<dbReference type="Proteomes" id="UP000000607">
    <property type="component" value="Chromosome"/>
</dbReference>
<dbReference type="GO" id="GO:0005886">
    <property type="term" value="C:plasma membrane"/>
    <property type="evidence" value="ECO:0007669"/>
    <property type="project" value="UniProtKB-SubCell"/>
</dbReference>
<dbReference type="GO" id="GO:0015451">
    <property type="term" value="F:decarboxylation-driven active transmembrane transporter activity"/>
    <property type="evidence" value="ECO:0007669"/>
    <property type="project" value="UniProtKB-EC"/>
</dbReference>
<dbReference type="GO" id="GO:0008948">
    <property type="term" value="F:oxaloacetate decarboxylase activity"/>
    <property type="evidence" value="ECO:0007669"/>
    <property type="project" value="UniProtKB-UniRule"/>
</dbReference>
<dbReference type="GO" id="GO:0015081">
    <property type="term" value="F:sodium ion transmembrane transporter activity"/>
    <property type="evidence" value="ECO:0007669"/>
    <property type="project" value="UniProtKB-UniRule"/>
</dbReference>
<dbReference type="GO" id="GO:0036376">
    <property type="term" value="P:sodium ion export across plasma membrane"/>
    <property type="evidence" value="ECO:0007669"/>
    <property type="project" value="InterPro"/>
</dbReference>
<dbReference type="HAMAP" id="MF_00404">
    <property type="entry name" value="OadG"/>
    <property type="match status" value="1"/>
</dbReference>
<dbReference type="InterPro" id="IPR005899">
    <property type="entry name" value="Na_pump_deCOase"/>
</dbReference>
<dbReference type="InterPro" id="IPR023424">
    <property type="entry name" value="OadG"/>
</dbReference>
<dbReference type="NCBIfam" id="TIGR01195">
    <property type="entry name" value="oadG_fam"/>
    <property type="match status" value="1"/>
</dbReference>
<dbReference type="NCBIfam" id="NF002792">
    <property type="entry name" value="PRK02919.1"/>
    <property type="match status" value="1"/>
</dbReference>
<dbReference type="Pfam" id="PF04277">
    <property type="entry name" value="OAD_gamma"/>
    <property type="match status" value="1"/>
</dbReference>
<accession>Q65WL3</accession>
<proteinExistence type="inferred from homology"/>
<organism>
    <name type="scientific">Mannheimia succiniciproducens (strain KCTC 0769BP / MBEL55E)</name>
    <dbReference type="NCBI Taxonomy" id="221988"/>
    <lineage>
        <taxon>Bacteria</taxon>
        <taxon>Pseudomonadati</taxon>
        <taxon>Pseudomonadota</taxon>
        <taxon>Gammaproteobacteria</taxon>
        <taxon>Pasteurellales</taxon>
        <taxon>Pasteurellaceae</taxon>
        <taxon>Basfia</taxon>
    </lineage>
</organism>
<feature type="chain" id="PRO_0000216452" description="Probable oxaloacetate decarboxylase gamma chain">
    <location>
        <begin position="1"/>
        <end position="88"/>
    </location>
</feature>
<feature type="transmembrane region" description="Helical" evidence="1">
    <location>
        <begin position="13"/>
        <end position="35"/>
    </location>
</feature>
<name>OADG_MANSM</name>
<evidence type="ECO:0000255" key="1">
    <source>
        <dbReference type="HAMAP-Rule" id="MF_00404"/>
    </source>
</evidence>
<gene>
    <name evidence="1" type="primary">oadG</name>
    <name type="ordered locus">MS0040</name>
</gene>
<comment type="function">
    <text evidence="1">Catalyzes the decarboxylation of oxaloacetate coupled to Na(+) translocation.</text>
</comment>
<comment type="catalytic activity">
    <reaction evidence="1">
        <text>oxaloacetate + 2 Na(+)(in) + H(+) = pyruvate + 2 Na(+)(out) + CO2</text>
        <dbReference type="Rhea" id="RHEA:57724"/>
        <dbReference type="ChEBI" id="CHEBI:15361"/>
        <dbReference type="ChEBI" id="CHEBI:15378"/>
        <dbReference type="ChEBI" id="CHEBI:16452"/>
        <dbReference type="ChEBI" id="CHEBI:16526"/>
        <dbReference type="ChEBI" id="CHEBI:29101"/>
        <dbReference type="EC" id="7.2.4.2"/>
    </reaction>
</comment>
<comment type="cofactor">
    <cofactor evidence="1">
        <name>Na(+)</name>
        <dbReference type="ChEBI" id="CHEBI:29101"/>
    </cofactor>
</comment>
<comment type="subunit">
    <text evidence="1">Heterotrimer of an alpha, a beta and a gamma subunit.</text>
</comment>
<comment type="subcellular location">
    <subcellularLocation>
        <location evidence="1">Cell membrane</location>
        <topology evidence="1">Single-pass membrane protein</topology>
    </subcellularLocation>
</comment>
<comment type="similarity">
    <text evidence="1">Belongs to the OadG family.</text>
</comment>
<keyword id="KW-1003">Cell membrane</keyword>
<keyword id="KW-0406">Ion transport</keyword>
<keyword id="KW-0472">Membrane</keyword>
<keyword id="KW-0915">Sodium</keyword>
<keyword id="KW-0739">Sodium transport</keyword>
<keyword id="KW-1278">Translocase</keyword>
<keyword id="KW-0812">Transmembrane</keyword>
<keyword id="KW-1133">Transmembrane helix</keyword>
<keyword id="KW-0813">Transport</keyword>